<reference key="1">
    <citation type="journal article" date="2004" name="J. Infect. Dis.">
        <title>Progress toward characterization of the group A Streptococcus metagenome: complete genome sequence of a macrolide-resistant serotype M6 strain.</title>
        <authorList>
            <person name="Banks D.J."/>
            <person name="Porcella S.F."/>
            <person name="Barbian K.D."/>
            <person name="Beres S.B."/>
            <person name="Philips L.E."/>
            <person name="Voyich J.M."/>
            <person name="DeLeo F.R."/>
            <person name="Martin J.M."/>
            <person name="Somerville G.A."/>
            <person name="Musser J.M."/>
        </authorList>
    </citation>
    <scope>NUCLEOTIDE SEQUENCE [LARGE SCALE GENOMIC DNA]</scope>
    <source>
        <strain>ATCC BAA-946 / MGAS10394</strain>
    </source>
</reference>
<reference key="2">
    <citation type="submission" date="2000-04" db="UniProtKB">
        <title>Two-dimensional gel electrophoresis map of Streptococcus pyogenes proteins.</title>
        <authorList>
            <person name="Hogan D.A."/>
            <person name="Du P."/>
            <person name="Stevenson T.I."/>
            <person name="Whitton M."/>
            <person name="Kilby G.W."/>
            <person name="Rogers J."/>
            <person name="VanBogelen R.A."/>
        </authorList>
    </citation>
    <scope>PROTEIN SEQUENCE OF 1-11; 22-75 AND 142-185</scope>
    <source>
        <strain>JRS4 / Serotype M6</strain>
    </source>
</reference>
<accession>Q5XA92</accession>
<accession>P82459</accession>
<keyword id="KW-0963">Cytoplasm</keyword>
<keyword id="KW-0903">Direct protein sequencing</keyword>
<keyword id="KW-0251">Elongation factor</keyword>
<keyword id="KW-0648">Protein biosynthesis</keyword>
<evidence type="ECO:0000250" key="1"/>
<evidence type="ECO:0000305" key="2"/>
<proteinExistence type="evidence at protein level"/>
<dbReference type="EMBL" id="CP000003">
    <property type="protein sequence ID" value="AAT87671.1"/>
    <property type="molecule type" value="Genomic_DNA"/>
</dbReference>
<dbReference type="RefSeq" id="WP_002988496.1">
    <property type="nucleotide sequence ID" value="NC_006086.1"/>
</dbReference>
<dbReference type="SMR" id="Q5XA92"/>
<dbReference type="GeneID" id="69900351"/>
<dbReference type="KEGG" id="spa:M6_Spy1536"/>
<dbReference type="HOGENOM" id="CLU_074944_3_0_9"/>
<dbReference type="UniPathway" id="UPA00345"/>
<dbReference type="Proteomes" id="UP000001167">
    <property type="component" value="Chromosome"/>
</dbReference>
<dbReference type="GO" id="GO:0005737">
    <property type="term" value="C:cytoplasm"/>
    <property type="evidence" value="ECO:0007669"/>
    <property type="project" value="UniProtKB-SubCell"/>
</dbReference>
<dbReference type="GO" id="GO:0003746">
    <property type="term" value="F:translation elongation factor activity"/>
    <property type="evidence" value="ECO:0007669"/>
    <property type="project" value="UniProtKB-UniRule"/>
</dbReference>
<dbReference type="GO" id="GO:0043043">
    <property type="term" value="P:peptide biosynthetic process"/>
    <property type="evidence" value="ECO:0007669"/>
    <property type="project" value="InterPro"/>
</dbReference>
<dbReference type="CDD" id="cd04470">
    <property type="entry name" value="S1_EF-P_repeat_1"/>
    <property type="match status" value="1"/>
</dbReference>
<dbReference type="CDD" id="cd05794">
    <property type="entry name" value="S1_EF-P_repeat_2"/>
    <property type="match status" value="1"/>
</dbReference>
<dbReference type="FunFam" id="2.30.30.30:FF:000003">
    <property type="entry name" value="Elongation factor P"/>
    <property type="match status" value="1"/>
</dbReference>
<dbReference type="FunFam" id="2.40.50.140:FF:000004">
    <property type="entry name" value="Elongation factor P"/>
    <property type="match status" value="1"/>
</dbReference>
<dbReference type="FunFam" id="2.40.50.140:FF:000009">
    <property type="entry name" value="Elongation factor P"/>
    <property type="match status" value="1"/>
</dbReference>
<dbReference type="Gene3D" id="2.30.30.30">
    <property type="match status" value="1"/>
</dbReference>
<dbReference type="Gene3D" id="2.40.50.140">
    <property type="entry name" value="Nucleic acid-binding proteins"/>
    <property type="match status" value="2"/>
</dbReference>
<dbReference type="HAMAP" id="MF_00141">
    <property type="entry name" value="EF_P"/>
    <property type="match status" value="1"/>
</dbReference>
<dbReference type="InterPro" id="IPR015365">
    <property type="entry name" value="Elong-fact-P_C"/>
</dbReference>
<dbReference type="InterPro" id="IPR012340">
    <property type="entry name" value="NA-bd_OB-fold"/>
</dbReference>
<dbReference type="InterPro" id="IPR014722">
    <property type="entry name" value="Rib_uL2_dom2"/>
</dbReference>
<dbReference type="InterPro" id="IPR020599">
    <property type="entry name" value="Transl_elong_fac_P/YeiP"/>
</dbReference>
<dbReference type="InterPro" id="IPR013185">
    <property type="entry name" value="Transl_elong_KOW-like"/>
</dbReference>
<dbReference type="InterPro" id="IPR001059">
    <property type="entry name" value="Transl_elong_P/YeiP_cen"/>
</dbReference>
<dbReference type="InterPro" id="IPR013852">
    <property type="entry name" value="Transl_elong_P/YeiP_CS"/>
</dbReference>
<dbReference type="InterPro" id="IPR011768">
    <property type="entry name" value="Transl_elongation_fac_P"/>
</dbReference>
<dbReference type="InterPro" id="IPR008991">
    <property type="entry name" value="Translation_prot_SH3-like_sf"/>
</dbReference>
<dbReference type="NCBIfam" id="TIGR00038">
    <property type="entry name" value="efp"/>
    <property type="match status" value="1"/>
</dbReference>
<dbReference type="NCBIfam" id="NF001810">
    <property type="entry name" value="PRK00529.1"/>
    <property type="match status" value="1"/>
</dbReference>
<dbReference type="PANTHER" id="PTHR30053">
    <property type="entry name" value="ELONGATION FACTOR P"/>
    <property type="match status" value="1"/>
</dbReference>
<dbReference type="PANTHER" id="PTHR30053:SF12">
    <property type="entry name" value="ELONGATION FACTOR P (EF-P) FAMILY PROTEIN"/>
    <property type="match status" value="1"/>
</dbReference>
<dbReference type="Pfam" id="PF01132">
    <property type="entry name" value="EFP"/>
    <property type="match status" value="1"/>
</dbReference>
<dbReference type="Pfam" id="PF08207">
    <property type="entry name" value="EFP_N"/>
    <property type="match status" value="1"/>
</dbReference>
<dbReference type="Pfam" id="PF09285">
    <property type="entry name" value="Elong-fact-P_C"/>
    <property type="match status" value="1"/>
</dbReference>
<dbReference type="PIRSF" id="PIRSF005901">
    <property type="entry name" value="EF-P"/>
    <property type="match status" value="1"/>
</dbReference>
<dbReference type="SMART" id="SM01185">
    <property type="entry name" value="EFP"/>
    <property type="match status" value="1"/>
</dbReference>
<dbReference type="SMART" id="SM00841">
    <property type="entry name" value="Elong-fact-P_C"/>
    <property type="match status" value="1"/>
</dbReference>
<dbReference type="SUPFAM" id="SSF50249">
    <property type="entry name" value="Nucleic acid-binding proteins"/>
    <property type="match status" value="2"/>
</dbReference>
<dbReference type="SUPFAM" id="SSF50104">
    <property type="entry name" value="Translation proteins SH3-like domain"/>
    <property type="match status" value="1"/>
</dbReference>
<dbReference type="PROSITE" id="PS01275">
    <property type="entry name" value="EFP"/>
    <property type="match status" value="1"/>
</dbReference>
<organism>
    <name type="scientific">Streptococcus pyogenes serotype M6 (strain ATCC BAA-946 / MGAS10394)</name>
    <dbReference type="NCBI Taxonomy" id="286636"/>
    <lineage>
        <taxon>Bacteria</taxon>
        <taxon>Bacillati</taxon>
        <taxon>Bacillota</taxon>
        <taxon>Bacilli</taxon>
        <taxon>Lactobacillales</taxon>
        <taxon>Streptococcaceae</taxon>
        <taxon>Streptococcus</taxon>
    </lineage>
</organism>
<protein>
    <recommendedName>
        <fullName>Elongation factor P</fullName>
        <shortName>EF-P</shortName>
    </recommendedName>
</protein>
<feature type="chain" id="PRO_0000094345" description="Elongation factor P">
    <location>
        <begin position="1"/>
        <end position="185"/>
    </location>
</feature>
<name>EFP_STRP6</name>
<comment type="function">
    <text evidence="1">Involved in peptide bond synthesis. Stimulates efficient translation and peptide-bond synthesis on native or reconstituted 70S ribosomes in vitro. Probably functions indirectly by altering the affinity of the ribosome for aminoacyl-tRNA, thus increasing their reactivity as acceptors for peptidyl transferase (By similarity).</text>
</comment>
<comment type="pathway">
    <text>Protein biosynthesis; polypeptide chain elongation.</text>
</comment>
<comment type="subcellular location">
    <subcellularLocation>
        <location evidence="1">Cytoplasm</location>
    </subcellularLocation>
</comment>
<comment type="similarity">
    <text evidence="2">Belongs to the elongation factor P family.</text>
</comment>
<sequence length="185" mass="20467">MIEASKLKAGMTFEAEGKLIRVLEASHHKPGKGNTIMRMKLRDVRTGSTFDTTYRPDEKFEQAIIETVPAQYLYKMDDTAYFMNTDTYDQYEIPVANVEQELLYILENSDVKIQFYGSEVIGVTVPTTVELTVAETQPSIKGATVTGSGKPATLETGLVVNVPDFIEAGQKLIINTAEGTYVSRA</sequence>
<gene>
    <name type="primary">efp</name>
    <name type="ordered locus">M6_Spy1536</name>
</gene>